<dbReference type="EMBL" id="EF067920">
    <property type="protein sequence ID" value="ABK20664.1"/>
    <property type="molecule type" value="Genomic_DNA"/>
</dbReference>
<dbReference type="RefSeq" id="YP_874441.1">
    <property type="nucleotide sequence ID" value="NC_008588.1"/>
</dbReference>
<dbReference type="SMR" id="A0T0G6"/>
<dbReference type="GeneID" id="4524564"/>
<dbReference type="InParanoid" id="A0T0G6"/>
<dbReference type="Proteomes" id="UP000000759">
    <property type="component" value="Chloroplast"/>
</dbReference>
<dbReference type="GO" id="GO:0009507">
    <property type="term" value="C:chloroplast"/>
    <property type="evidence" value="ECO:0007669"/>
    <property type="project" value="UniProtKB-SubCell"/>
</dbReference>
<dbReference type="GO" id="GO:1990904">
    <property type="term" value="C:ribonucleoprotein complex"/>
    <property type="evidence" value="ECO:0007669"/>
    <property type="project" value="UniProtKB-KW"/>
</dbReference>
<dbReference type="GO" id="GO:0005840">
    <property type="term" value="C:ribosome"/>
    <property type="evidence" value="ECO:0007669"/>
    <property type="project" value="UniProtKB-KW"/>
</dbReference>
<dbReference type="GO" id="GO:0003735">
    <property type="term" value="F:structural constituent of ribosome"/>
    <property type="evidence" value="ECO:0007669"/>
    <property type="project" value="InterPro"/>
</dbReference>
<dbReference type="GO" id="GO:0006412">
    <property type="term" value="P:translation"/>
    <property type="evidence" value="ECO:0007669"/>
    <property type="project" value="UniProtKB-UniRule"/>
</dbReference>
<dbReference type="Gene3D" id="1.10.287.3980">
    <property type="match status" value="1"/>
</dbReference>
<dbReference type="HAMAP" id="MF_00391">
    <property type="entry name" value="Ribosomal_bL34"/>
    <property type="match status" value="1"/>
</dbReference>
<dbReference type="InterPro" id="IPR000271">
    <property type="entry name" value="Ribosomal_bL34"/>
</dbReference>
<dbReference type="InterPro" id="IPR020939">
    <property type="entry name" value="Ribosomal_bL34_CS"/>
</dbReference>
<dbReference type="NCBIfam" id="TIGR01030">
    <property type="entry name" value="rpmH_bact"/>
    <property type="match status" value="1"/>
</dbReference>
<dbReference type="Pfam" id="PF00468">
    <property type="entry name" value="Ribosomal_L34"/>
    <property type="match status" value="1"/>
</dbReference>
<dbReference type="PROSITE" id="PS00784">
    <property type="entry name" value="RIBOSOMAL_L34"/>
    <property type="match status" value="1"/>
</dbReference>
<reference key="1">
    <citation type="journal article" date="2007" name="Mol. Genet. Genomics">
        <title>Chloroplast genomes of the diatoms Phaeodactylum tricornutum and Thalassiosira pseudonana: comparison with other plastid genomes of the red lineage.</title>
        <authorList>
            <person name="Oudot-Le Secq M.-P."/>
            <person name="Grimwood J."/>
            <person name="Shapiro H."/>
            <person name="Armbrust E.V."/>
            <person name="Bowler C."/>
            <person name="Green B.R."/>
        </authorList>
    </citation>
    <scope>NUCLEOTIDE SEQUENCE [LARGE SCALE GENOMIC DNA]</scope>
    <source>
        <strain>CCAP 1055/1</strain>
    </source>
</reference>
<keyword id="KW-0150">Chloroplast</keyword>
<keyword id="KW-0934">Plastid</keyword>
<keyword id="KW-1185">Reference proteome</keyword>
<keyword id="KW-0687">Ribonucleoprotein</keyword>
<keyword id="KW-0689">Ribosomal protein</keyword>
<geneLocation type="chloroplast"/>
<gene>
    <name evidence="1" type="primary">rpl34</name>
</gene>
<protein>
    <recommendedName>
        <fullName evidence="1">Large ribosomal subunit protein bL34c</fullName>
    </recommendedName>
    <alternativeName>
        <fullName evidence="3">50S ribosomal protein L34, chloroplastic</fullName>
    </alternativeName>
</protein>
<organism>
    <name type="scientific">Phaeodactylum tricornutum (strain CCAP 1055/1)</name>
    <dbReference type="NCBI Taxonomy" id="556484"/>
    <lineage>
        <taxon>Eukaryota</taxon>
        <taxon>Sar</taxon>
        <taxon>Stramenopiles</taxon>
        <taxon>Ochrophyta</taxon>
        <taxon>Bacillariophyta</taxon>
        <taxon>Bacillariophyceae</taxon>
        <taxon>Bacillariophycidae</taxon>
        <taxon>Naviculales</taxon>
        <taxon>Phaeodactylaceae</taxon>
        <taxon>Phaeodactylum</taxon>
    </lineage>
</organism>
<proteinExistence type="inferred from homology"/>
<comment type="subcellular location">
    <subcellularLocation>
        <location>Plastid</location>
        <location>Chloroplast</location>
    </subcellularLocation>
</comment>
<comment type="similarity">
    <text evidence="1">Belongs to the bacterial ribosomal protein bL34 family.</text>
</comment>
<sequence>MTKRTLSNKSRYSVLKLSGFRSRMATPQGRKTIRNRRKKGRKNLTLRR</sequence>
<feature type="chain" id="PRO_0000276529" description="Large ribosomal subunit protein bL34c">
    <location>
        <begin position="1"/>
        <end position="48"/>
    </location>
</feature>
<feature type="region of interest" description="Disordered" evidence="2">
    <location>
        <begin position="18"/>
        <end position="48"/>
    </location>
</feature>
<feature type="compositionally biased region" description="Basic residues" evidence="2">
    <location>
        <begin position="31"/>
        <end position="48"/>
    </location>
</feature>
<evidence type="ECO:0000255" key="1">
    <source>
        <dbReference type="HAMAP-Rule" id="MF_00391"/>
    </source>
</evidence>
<evidence type="ECO:0000256" key="2">
    <source>
        <dbReference type="SAM" id="MobiDB-lite"/>
    </source>
</evidence>
<evidence type="ECO:0000305" key="3"/>
<accession>A0T0G6</accession>
<name>RK34_PHATC</name>